<keyword id="KW-0202">Cytokine</keyword>
<keyword id="KW-1015">Disulfide bond</keyword>
<keyword id="KW-0325">Glycoprotein</keyword>
<keyword id="KW-0339">Growth factor</keyword>
<keyword id="KW-1185">Reference proteome</keyword>
<keyword id="KW-0964">Secreted</keyword>
<keyword id="KW-0732">Signal</keyword>
<gene>
    <name type="primary">Il3</name>
    <name type="synonym">Il-3</name>
</gene>
<protein>
    <recommendedName>
        <fullName>Interleukin-3</fullName>
        <shortName>IL-3</shortName>
    </recommendedName>
    <alternativeName>
        <fullName>Hematopoietic growth factor</fullName>
    </alternativeName>
    <alternativeName>
        <fullName>Mast cell growth factor</fullName>
        <shortName>MCGF</shortName>
    </alternativeName>
    <alternativeName>
        <fullName>Multipotential colony-stimulating factor</fullName>
    </alternativeName>
    <alternativeName>
        <fullName>P-cell-stimulating factor</fullName>
    </alternativeName>
</protein>
<dbReference type="EMBL" id="X03846">
    <property type="protein sequence ID" value="CAA27473.1"/>
    <property type="molecule type" value="Genomic_DNA"/>
</dbReference>
<dbReference type="EMBL" id="X03914">
    <property type="protein sequence ID" value="CAA27549.1"/>
    <property type="molecule type" value="Genomic_DNA"/>
</dbReference>
<dbReference type="EMBL" id="U81493">
    <property type="protein sequence ID" value="AAC17705.1"/>
    <property type="molecule type" value="mRNA"/>
</dbReference>
<dbReference type="PIR" id="S07369">
    <property type="entry name" value="S07369"/>
</dbReference>
<dbReference type="SMR" id="P04823"/>
<dbReference type="FunCoup" id="P04823">
    <property type="interactions" value="8"/>
</dbReference>
<dbReference type="STRING" id="10116.ENSRNOP00000030704"/>
<dbReference type="GlyCosmos" id="P04823">
    <property type="glycosylation" value="2 sites, No reported glycans"/>
</dbReference>
<dbReference type="GlyGen" id="P04823">
    <property type="glycosylation" value="3 sites"/>
</dbReference>
<dbReference type="PaxDb" id="10116-ENSRNOP00000030704"/>
<dbReference type="UCSC" id="RGD:2897">
    <property type="organism name" value="rat"/>
</dbReference>
<dbReference type="AGR" id="RGD:2897"/>
<dbReference type="RGD" id="2897">
    <property type="gene designation" value="Il3"/>
</dbReference>
<dbReference type="InParanoid" id="P04823"/>
<dbReference type="PhylomeDB" id="P04823"/>
<dbReference type="Reactome" id="R-RNO-512988">
    <property type="pathway name" value="Interleukin-3, Interleukin-5 and GM-CSF signaling"/>
</dbReference>
<dbReference type="Reactome" id="R-RNO-5673001">
    <property type="pathway name" value="RAF/MAP kinase cascade"/>
</dbReference>
<dbReference type="Reactome" id="R-RNO-912526">
    <property type="pathway name" value="Interleukin receptor SHC signaling"/>
</dbReference>
<dbReference type="PRO" id="PR:P04823"/>
<dbReference type="Proteomes" id="UP000002494">
    <property type="component" value="Unplaced"/>
</dbReference>
<dbReference type="GO" id="GO:0005615">
    <property type="term" value="C:extracellular space"/>
    <property type="evidence" value="ECO:0000314"/>
    <property type="project" value="RGD"/>
</dbReference>
<dbReference type="GO" id="GO:0005125">
    <property type="term" value="F:cytokine activity"/>
    <property type="evidence" value="ECO:0000314"/>
    <property type="project" value="RGD"/>
</dbReference>
<dbReference type="GO" id="GO:0008083">
    <property type="term" value="F:growth factor activity"/>
    <property type="evidence" value="ECO:0000266"/>
    <property type="project" value="RGD"/>
</dbReference>
<dbReference type="GO" id="GO:0005135">
    <property type="term" value="F:interleukin-3 receptor binding"/>
    <property type="evidence" value="ECO:0000315"/>
    <property type="project" value="RGD"/>
</dbReference>
<dbReference type="GO" id="GO:0001783">
    <property type="term" value="P:B cell apoptotic process"/>
    <property type="evidence" value="ECO:0000266"/>
    <property type="project" value="RGD"/>
</dbReference>
<dbReference type="GO" id="GO:0042100">
    <property type="term" value="P:B cell proliferation"/>
    <property type="evidence" value="ECO:0000266"/>
    <property type="project" value="RGD"/>
</dbReference>
<dbReference type="GO" id="GO:0008283">
    <property type="term" value="P:cell population proliferation"/>
    <property type="evidence" value="ECO:0000266"/>
    <property type="project" value="RGD"/>
</dbReference>
<dbReference type="GO" id="GO:0097696">
    <property type="term" value="P:cell surface receptor signaling pathway via STAT"/>
    <property type="evidence" value="ECO:0000266"/>
    <property type="project" value="RGD"/>
</dbReference>
<dbReference type="GO" id="GO:0019221">
    <property type="term" value="P:cytokine-mediated signaling pathway"/>
    <property type="evidence" value="ECO:0000266"/>
    <property type="project" value="RGD"/>
</dbReference>
<dbReference type="GO" id="GO:0035162">
    <property type="term" value="P:embryonic hemopoiesis"/>
    <property type="evidence" value="ECO:0000266"/>
    <property type="project" value="RGD"/>
</dbReference>
<dbReference type="GO" id="GO:0097192">
    <property type="term" value="P:extrinsic apoptotic signaling pathway in absence of ligand"/>
    <property type="evidence" value="ECO:0000266"/>
    <property type="project" value="RGD"/>
</dbReference>
<dbReference type="GO" id="GO:0002244">
    <property type="term" value="P:hematopoietic progenitor cell differentiation"/>
    <property type="evidence" value="ECO:0000266"/>
    <property type="project" value="RGD"/>
</dbReference>
<dbReference type="GO" id="GO:0030097">
    <property type="term" value="P:hemopoiesis"/>
    <property type="evidence" value="ECO:0000315"/>
    <property type="project" value="RGD"/>
</dbReference>
<dbReference type="GO" id="GO:0006955">
    <property type="term" value="P:immune response"/>
    <property type="evidence" value="ECO:0007669"/>
    <property type="project" value="InterPro"/>
</dbReference>
<dbReference type="GO" id="GO:0038156">
    <property type="term" value="P:interleukin-3-mediated signaling pathway"/>
    <property type="evidence" value="ECO:0000266"/>
    <property type="project" value="RGD"/>
</dbReference>
<dbReference type="GO" id="GO:0007254">
    <property type="term" value="P:JNK cascade"/>
    <property type="evidence" value="ECO:0000266"/>
    <property type="project" value="RGD"/>
</dbReference>
<dbReference type="GO" id="GO:0033024">
    <property type="term" value="P:mast cell apoptotic process"/>
    <property type="evidence" value="ECO:0000266"/>
    <property type="project" value="RGD"/>
</dbReference>
<dbReference type="GO" id="GO:0070662">
    <property type="term" value="P:mast cell proliferation"/>
    <property type="evidence" value="ECO:0000266"/>
    <property type="project" value="RGD"/>
</dbReference>
<dbReference type="GO" id="GO:0030224">
    <property type="term" value="P:monocyte differentiation"/>
    <property type="evidence" value="ECO:0000266"/>
    <property type="project" value="RGD"/>
</dbReference>
<dbReference type="GO" id="GO:0033028">
    <property type="term" value="P:myeloid cell apoptotic process"/>
    <property type="evidence" value="ECO:0000266"/>
    <property type="project" value="RGD"/>
</dbReference>
<dbReference type="GO" id="GO:0002573">
    <property type="term" value="P:myeloid leukocyte differentiation"/>
    <property type="evidence" value="ECO:0000266"/>
    <property type="project" value="RGD"/>
</dbReference>
<dbReference type="GO" id="GO:0010507">
    <property type="term" value="P:negative regulation of autophagy"/>
    <property type="evidence" value="ECO:0000266"/>
    <property type="project" value="RGD"/>
</dbReference>
<dbReference type="GO" id="GO:0002903">
    <property type="term" value="P:negative regulation of B cell apoptotic process"/>
    <property type="evidence" value="ECO:0000266"/>
    <property type="project" value="RGD"/>
</dbReference>
<dbReference type="GO" id="GO:0033026">
    <property type="term" value="P:negative regulation of mast cell apoptotic process"/>
    <property type="evidence" value="ECO:0000266"/>
    <property type="project" value="RGD"/>
</dbReference>
<dbReference type="GO" id="GO:0033033">
    <property type="term" value="P:negative regulation of myeloid cell apoptotic process"/>
    <property type="evidence" value="ECO:0000266"/>
    <property type="project" value="RGD"/>
</dbReference>
<dbReference type="GO" id="GO:0030890">
    <property type="term" value="P:positive regulation of B cell proliferation"/>
    <property type="evidence" value="ECO:0000266"/>
    <property type="project" value="RGD"/>
</dbReference>
<dbReference type="GO" id="GO:0008284">
    <property type="term" value="P:positive regulation of cell population proliferation"/>
    <property type="evidence" value="ECO:0000314"/>
    <property type="project" value="RGD"/>
</dbReference>
<dbReference type="GO" id="GO:1901534">
    <property type="term" value="P:positive regulation of hematopoietic progenitor cell differentiation"/>
    <property type="evidence" value="ECO:0000266"/>
    <property type="project" value="RGD"/>
</dbReference>
<dbReference type="GO" id="GO:0046330">
    <property type="term" value="P:positive regulation of JNK cascade"/>
    <property type="evidence" value="ECO:0000266"/>
    <property type="project" value="RGD"/>
</dbReference>
<dbReference type="GO" id="GO:0070668">
    <property type="term" value="P:positive regulation of mast cell proliferation"/>
    <property type="evidence" value="ECO:0000266"/>
    <property type="project" value="RGD"/>
</dbReference>
<dbReference type="GO" id="GO:0002763">
    <property type="term" value="P:positive regulation of myeloid leukocyte differentiation"/>
    <property type="evidence" value="ECO:0000266"/>
    <property type="project" value="RGD"/>
</dbReference>
<dbReference type="GO" id="GO:0042102">
    <property type="term" value="P:positive regulation of T cell proliferation"/>
    <property type="evidence" value="ECO:0000266"/>
    <property type="project" value="RGD"/>
</dbReference>
<dbReference type="GO" id="GO:0001558">
    <property type="term" value="P:regulation of cell growth"/>
    <property type="evidence" value="ECO:0000315"/>
    <property type="project" value="RGD"/>
</dbReference>
<dbReference type="GO" id="GO:0010468">
    <property type="term" value="P:regulation of gene expression"/>
    <property type="evidence" value="ECO:0000266"/>
    <property type="project" value="RGD"/>
</dbReference>
<dbReference type="GO" id="GO:0006110">
    <property type="term" value="P:regulation of glycolytic process"/>
    <property type="evidence" value="ECO:0000266"/>
    <property type="project" value="RGD"/>
</dbReference>
<dbReference type="GO" id="GO:0009725">
    <property type="term" value="P:response to hormone"/>
    <property type="evidence" value="ECO:0000315"/>
    <property type="project" value="RGD"/>
</dbReference>
<dbReference type="GO" id="GO:0001666">
    <property type="term" value="P:response to hypoxia"/>
    <property type="evidence" value="ECO:0000266"/>
    <property type="project" value="RGD"/>
</dbReference>
<dbReference type="GO" id="GO:0042098">
    <property type="term" value="P:T cell proliferation"/>
    <property type="evidence" value="ECO:0000266"/>
    <property type="project" value="RGD"/>
</dbReference>
<dbReference type="Gene3D" id="1.20.1250.10">
    <property type="match status" value="1"/>
</dbReference>
<dbReference type="InterPro" id="IPR009079">
    <property type="entry name" value="4_helix_cytokine-like_core"/>
</dbReference>
<dbReference type="InterPro" id="IPR002183">
    <property type="entry name" value="IL-3"/>
</dbReference>
<dbReference type="PANTHER" id="PTHR48489">
    <property type="entry name" value="INTERLEUKIN-3"/>
    <property type="match status" value="1"/>
</dbReference>
<dbReference type="PANTHER" id="PTHR48489:SF1">
    <property type="entry name" value="INTERLEUKIN-3"/>
    <property type="match status" value="1"/>
</dbReference>
<dbReference type="Pfam" id="PF02059">
    <property type="entry name" value="IL3"/>
    <property type="match status" value="1"/>
</dbReference>
<dbReference type="PIRSF" id="PIRSF001939">
    <property type="entry name" value="IL-3"/>
    <property type="match status" value="1"/>
</dbReference>
<dbReference type="PRINTS" id="PR00430">
    <property type="entry name" value="INTERLEUKIN3"/>
</dbReference>
<dbReference type="SUPFAM" id="SSF47266">
    <property type="entry name" value="4-helical cytokines"/>
    <property type="match status" value="1"/>
</dbReference>
<evidence type="ECO:0000250" key="1"/>
<evidence type="ECO:0000250" key="2">
    <source>
        <dbReference type="UniProtKB" id="P08700"/>
    </source>
</evidence>
<evidence type="ECO:0000255" key="3"/>
<evidence type="ECO:0000256" key="4">
    <source>
        <dbReference type="SAM" id="MobiDB-lite"/>
    </source>
</evidence>
<evidence type="ECO:0000305" key="5"/>
<reference key="1">
    <citation type="journal article" date="1986" name="Nucleic Acids Res.">
        <title>Cloning and expression of the rat interleukin-3 gene.</title>
        <authorList>
            <person name="Cohen D.R."/>
            <person name="Hapel A.J."/>
            <person name="Young I.G."/>
        </authorList>
    </citation>
    <scope>NUCLEOTIDE SEQUENCE [GENOMIC DNA]</scope>
</reference>
<reference key="2">
    <citation type="journal article" date="1998" name="Gene Ther.">
        <title>IL-1/IL-3 gene therapy of non-small cell lung cancer (NSCLC) in rats using 'cracked' adenoproducer cells.</title>
        <authorList>
            <person name="Esandi M.C."/>
            <person name="van Someren G.D."/>
            <person name="Bout A."/>
            <person name="Mulder A.H."/>
            <person name="van Bekkum D.W."/>
            <person name="Valerio D."/>
            <person name="Noteboom J.L."/>
        </authorList>
    </citation>
    <scope>NUCLEOTIDE SEQUENCE [MRNA]</scope>
</reference>
<reference key="3">
    <citation type="journal article" date="2021" name="J. Biosci.">
        <title>IL-3 inhibits rat osteoclast differentiation induced by TNF-alpha and other pro-osteoclastogenic cytokines.</title>
        <authorList>
            <person name="Piprode V."/>
            <person name="Singh K."/>
            <person name="Kumar A."/>
            <person name="Josh S.R."/>
            <person name="Wani M.R."/>
        </authorList>
    </citation>
    <scope>FUNCTION</scope>
</reference>
<name>IL3_RAT</name>
<comment type="function">
    <text evidence="2">Cytokine secreted predominantly by activated T-lymphocytes as well as mast cells and osteoblastic cells that controls the production and differentiation of hematopoietic progenitor cells into lineage-restricted cells. Also stimulates mature basophils, eosinophils, and monocytes to become functionally activated. In addition, plays an important role in neural cell proliferation and survival. Participates as well in bone homeostasis and inhibits osteoclast differentiation by preventing NF-kappa-B nuclear translocation and activation (PubMed:34183475). Mechanistically, exerts its biological effects through a receptor composed of IL3RA subunit and a signal transducing subunit IL3RB (By similarity). Receptor stimulation results in the rapid activation of JAK2 kinase activity leading to STAT5-mediated transcriptional program. Alternatively, contributes to cell survival under oxidative stress in non-hematopoietic systems by activating pathways mediated by PI3K/AKT and ERK (By similarity).</text>
</comment>
<comment type="subunit">
    <text>Monomer.</text>
</comment>
<comment type="subcellular location">
    <subcellularLocation>
        <location>Secreted</location>
    </subcellularLocation>
</comment>
<comment type="tissue specificity">
    <text>Activated T-cells, mast cells, natural killer cells.</text>
</comment>
<comment type="similarity">
    <text evidence="5">Belongs to the IL-3 family.</text>
</comment>
<feature type="signal peptide" evidence="3">
    <location>
        <begin position="1"/>
        <end position="27"/>
    </location>
</feature>
<feature type="chain" id="PRO_0000015521" description="Interleukin-3">
    <location>
        <begin position="28"/>
        <end position="166"/>
    </location>
</feature>
<feature type="region of interest" description="Disordered" evidence="4">
    <location>
        <begin position="145"/>
        <end position="166"/>
    </location>
</feature>
<feature type="glycosylation site" description="N-linked (GlcNAc...) asparagine" evidence="3">
    <location>
        <position position="60"/>
    </location>
</feature>
<feature type="glycosylation site" description="N-linked (GlcNAc...) asparagine" evidence="3">
    <location>
        <position position="70"/>
    </location>
</feature>
<feature type="disulfide bond" evidence="1">
    <location>
        <begin position="43"/>
        <end position="106"/>
    </location>
</feature>
<feature type="disulfide bond" evidence="1">
    <location>
        <begin position="105"/>
        <end position="166"/>
    </location>
</feature>
<accession>P04823</accession>
<accession>P70513</accession>
<sequence>MVLASSTTSILCMLLPLLMLFHQGLQISDRGSDAHHLLRTLDCRTIALEILVKLPVSGLNNSDDKANLRNSTLRRVNLDEFLKSQEEFDSQDTTDIKSKLQKLKCCIPAAASDSVLPGVYNKDLDDFKKKLRFYVIHLKDLQPVSVSRPPQPTSSSDNFRPMTVEC</sequence>
<proteinExistence type="evidence at transcript level"/>
<organism>
    <name type="scientific">Rattus norvegicus</name>
    <name type="common">Rat</name>
    <dbReference type="NCBI Taxonomy" id="10116"/>
    <lineage>
        <taxon>Eukaryota</taxon>
        <taxon>Metazoa</taxon>
        <taxon>Chordata</taxon>
        <taxon>Craniata</taxon>
        <taxon>Vertebrata</taxon>
        <taxon>Euteleostomi</taxon>
        <taxon>Mammalia</taxon>
        <taxon>Eutheria</taxon>
        <taxon>Euarchontoglires</taxon>
        <taxon>Glires</taxon>
        <taxon>Rodentia</taxon>
        <taxon>Myomorpha</taxon>
        <taxon>Muroidea</taxon>
        <taxon>Muridae</taxon>
        <taxon>Murinae</taxon>
        <taxon>Rattus</taxon>
    </lineage>
</organism>